<keyword id="KW-0002">3D-structure</keyword>
<keyword id="KW-0342">GTP-binding</keyword>
<keyword id="KW-0396">Initiation factor</keyword>
<keyword id="KW-0547">Nucleotide-binding</keyword>
<keyword id="KW-0648">Protein biosynthesis</keyword>
<keyword id="KW-1185">Reference proteome</keyword>
<protein>
    <recommendedName>
        <fullName>Probable translation initiation factor IF-2</fullName>
    </recommendedName>
</protein>
<organism>
    <name type="scientific">Methanothermobacter thermautotrophicus (strain ATCC 29096 / DSM 1053 / JCM 10044 / NBRC 100330 / Delta H)</name>
    <name type="common">Methanobacterium thermoautotrophicum</name>
    <dbReference type="NCBI Taxonomy" id="187420"/>
    <lineage>
        <taxon>Archaea</taxon>
        <taxon>Methanobacteriati</taxon>
        <taxon>Methanobacteriota</taxon>
        <taxon>Methanomada group</taxon>
        <taxon>Methanobacteria</taxon>
        <taxon>Methanobacteriales</taxon>
        <taxon>Methanobacteriaceae</taxon>
        <taxon>Methanothermobacter</taxon>
    </lineage>
</organism>
<sequence>MKIRSPIVSVLGHVDHGKTTLLDHIRGSAVASREAGGITQHIGATEIPMDVIEGICGDFLKKFSIRETLPGLFFIDTPGHEAFTTLRKRGGALADLAILIVDINEGFKPQTQEALNILRMYRTPFVVAANKIDRIHGWRVHEGRPFMETFSKQDIQVQQKLDTKVYELVGKLHEEGFESERFDRVTDFASQVSIIPISAITGEGIPELLTMLMGLAQQYLREQLKIEEDSPARGTILEVKEETGLGMTIDAVIYDGILRKDDTIAMMTSKDVISTRIRSLLKPRPLEEMRESRKKFQKVDEVVAAAGIKIVAPGIDDVMAGSPLRVVTDPEKVREEILSEIEDIKIDTDEAGVVVKADTLGSLEAVVKILRDMYVPIKVADIGDVSRRDVVNAGIALQEDRVYGAIIAFNVKVIPSAAQELKNSDIKLFQGNVIYRLMEEYEEWVRGIEEEKKKKWMEAIIKPASIRLIPKLVFRQSKPAIGGVEVLTGVIRQGYPLMNDDGETVGTVESMQDKGENLKSASRGQKVAMAIKDAVYGKTIHEGDTLYVDIPENHYHILKEQLSGDLTDEELDLMDKIAEIKRKKNPDWGMKAPF</sequence>
<feature type="chain" id="PRO_0000137305" description="Probable translation initiation factor IF-2">
    <location>
        <begin position="1"/>
        <end position="594"/>
    </location>
</feature>
<feature type="domain" description="tr-type G">
    <location>
        <begin position="3"/>
        <end position="220"/>
    </location>
</feature>
<feature type="region of interest" description="G1" evidence="1">
    <location>
        <begin position="12"/>
        <end position="19"/>
    </location>
</feature>
<feature type="region of interest" description="G2" evidence="1">
    <location>
        <begin position="37"/>
        <end position="41"/>
    </location>
</feature>
<feature type="region of interest" description="G3" evidence="1">
    <location>
        <begin position="76"/>
        <end position="79"/>
    </location>
</feature>
<feature type="region of interest" description="G4" evidence="1">
    <location>
        <begin position="130"/>
        <end position="133"/>
    </location>
</feature>
<feature type="region of interest" description="G5" evidence="1">
    <location>
        <begin position="198"/>
        <end position="200"/>
    </location>
</feature>
<feature type="binding site" evidence="1">
    <location>
        <begin position="12"/>
        <end position="19"/>
    </location>
    <ligand>
        <name>GTP</name>
        <dbReference type="ChEBI" id="CHEBI:37565"/>
    </ligand>
</feature>
<feature type="binding site" evidence="1">
    <location>
        <begin position="76"/>
        <end position="80"/>
    </location>
    <ligand>
        <name>GTP</name>
        <dbReference type="ChEBI" id="CHEBI:37565"/>
    </ligand>
</feature>
<feature type="binding site" evidence="1">
    <location>
        <begin position="130"/>
        <end position="133"/>
    </location>
    <ligand>
        <name>GTP</name>
        <dbReference type="ChEBI" id="CHEBI:37565"/>
    </ligand>
</feature>
<feature type="strand" evidence="4">
    <location>
        <begin position="7"/>
        <end position="11"/>
    </location>
</feature>
<feature type="helix" evidence="4">
    <location>
        <begin position="18"/>
        <end position="30"/>
    </location>
</feature>
<feature type="strand" evidence="4">
    <location>
        <begin position="44"/>
        <end position="48"/>
    </location>
</feature>
<feature type="helix" evidence="4">
    <location>
        <begin position="49"/>
        <end position="55"/>
    </location>
</feature>
<feature type="helix" evidence="4">
    <location>
        <begin position="58"/>
        <end position="62"/>
    </location>
</feature>
<feature type="helix" evidence="4">
    <location>
        <begin position="64"/>
        <end position="67"/>
    </location>
</feature>
<feature type="strand" evidence="4">
    <location>
        <begin position="71"/>
        <end position="75"/>
    </location>
</feature>
<feature type="turn" evidence="5">
    <location>
        <begin position="79"/>
        <end position="81"/>
    </location>
</feature>
<feature type="helix" evidence="5">
    <location>
        <begin position="83"/>
        <end position="85"/>
    </location>
</feature>
<feature type="strand" evidence="5">
    <location>
        <begin position="86"/>
        <end position="88"/>
    </location>
</feature>
<feature type="strand" evidence="4">
    <location>
        <begin position="89"/>
        <end position="93"/>
    </location>
</feature>
<feature type="strand" evidence="4">
    <location>
        <begin position="95"/>
        <end position="102"/>
    </location>
</feature>
<feature type="turn" evidence="4">
    <location>
        <begin position="103"/>
        <end position="105"/>
    </location>
</feature>
<feature type="helix" evidence="4">
    <location>
        <begin position="109"/>
        <end position="120"/>
    </location>
</feature>
<feature type="strand" evidence="4">
    <location>
        <begin position="125"/>
        <end position="130"/>
    </location>
</feature>
<feature type="helix" evidence="4">
    <location>
        <begin position="132"/>
        <end position="134"/>
    </location>
</feature>
<feature type="helix" evidence="4">
    <location>
        <begin position="146"/>
        <end position="150"/>
    </location>
</feature>
<feature type="helix" evidence="4">
    <location>
        <begin position="155"/>
        <end position="174"/>
    </location>
</feature>
<feature type="strand" evidence="4">
    <location>
        <begin position="178"/>
        <end position="181"/>
    </location>
</feature>
<feature type="helix" evidence="4">
    <location>
        <begin position="182"/>
        <end position="184"/>
    </location>
</feature>
<feature type="turn" evidence="4">
    <location>
        <begin position="188"/>
        <end position="190"/>
    </location>
</feature>
<feature type="strand" evidence="4">
    <location>
        <begin position="191"/>
        <end position="196"/>
    </location>
</feature>
<feature type="turn" evidence="4">
    <location>
        <begin position="199"/>
        <end position="201"/>
    </location>
</feature>
<feature type="helix" evidence="4">
    <location>
        <begin position="205"/>
        <end position="219"/>
    </location>
</feature>
<feature type="helix" evidence="4">
    <location>
        <begin position="222"/>
        <end position="224"/>
    </location>
</feature>
<feature type="strand" evidence="4">
    <location>
        <begin position="233"/>
        <end position="242"/>
    </location>
</feature>
<feature type="strand" evidence="4">
    <location>
        <begin position="245"/>
        <end position="259"/>
    </location>
</feature>
<feature type="strand" evidence="4">
    <location>
        <begin position="263"/>
        <end position="276"/>
    </location>
</feature>
<feature type="strand" evidence="4">
    <location>
        <begin position="279"/>
        <end position="283"/>
    </location>
</feature>
<feature type="strand" evidence="4">
    <location>
        <begin position="295"/>
        <end position="298"/>
    </location>
</feature>
<feature type="strand" evidence="4">
    <location>
        <begin position="300"/>
        <end position="311"/>
    </location>
</feature>
<feature type="strand" evidence="5">
    <location>
        <begin position="316"/>
        <end position="318"/>
    </location>
</feature>
<feature type="strand" evidence="4">
    <location>
        <begin position="323"/>
        <end position="326"/>
    </location>
</feature>
<feature type="helix" evidence="4">
    <location>
        <begin position="330"/>
        <end position="342"/>
    </location>
</feature>
<feature type="strand" evidence="4">
    <location>
        <begin position="349"/>
        <end position="351"/>
    </location>
</feature>
<feature type="strand" evidence="4">
    <location>
        <begin position="354"/>
        <end position="359"/>
    </location>
</feature>
<feature type="helix" evidence="4">
    <location>
        <begin position="360"/>
        <end position="372"/>
    </location>
</feature>
<feature type="strand" evidence="4">
    <location>
        <begin position="378"/>
        <end position="385"/>
    </location>
</feature>
<feature type="helix" evidence="4">
    <location>
        <begin position="387"/>
        <end position="397"/>
    </location>
</feature>
<feature type="turn" evidence="3">
    <location>
        <begin position="401"/>
        <end position="403"/>
    </location>
</feature>
<feature type="strand" evidence="4">
    <location>
        <begin position="405"/>
        <end position="410"/>
    </location>
</feature>
<feature type="helix" evidence="4">
    <location>
        <begin position="415"/>
        <end position="420"/>
    </location>
</feature>
<feature type="strand" evidence="4">
    <location>
        <begin position="422"/>
        <end position="432"/>
    </location>
</feature>
<feature type="helix" evidence="4">
    <location>
        <begin position="434"/>
        <end position="457"/>
    </location>
</feature>
<feature type="strand" evidence="4">
    <location>
        <begin position="464"/>
        <end position="475"/>
    </location>
</feature>
<feature type="strand" evidence="4">
    <location>
        <begin position="477"/>
        <end position="492"/>
    </location>
</feature>
<feature type="strand" evidence="4">
    <location>
        <begin position="496"/>
        <end position="498"/>
    </location>
</feature>
<feature type="strand" evidence="4">
    <location>
        <begin position="504"/>
        <end position="513"/>
    </location>
</feature>
<feature type="strand" evidence="4">
    <location>
        <begin position="516"/>
        <end position="522"/>
    </location>
</feature>
<feature type="strand" evidence="4">
    <location>
        <begin position="527"/>
        <end position="532"/>
    </location>
</feature>
<feature type="turn" evidence="4">
    <location>
        <begin position="537"/>
        <end position="539"/>
    </location>
</feature>
<feature type="strand" evidence="4">
    <location>
        <begin position="545"/>
        <end position="548"/>
    </location>
</feature>
<feature type="helix" evidence="4">
    <location>
        <begin position="552"/>
        <end position="556"/>
    </location>
</feature>
<feature type="helix" evidence="4">
    <location>
        <begin position="568"/>
        <end position="581"/>
    </location>
</feature>
<dbReference type="EMBL" id="AE000666">
    <property type="protein sequence ID" value="AAB84765.1"/>
    <property type="molecule type" value="Genomic_DNA"/>
</dbReference>
<dbReference type="PIR" id="E69132">
    <property type="entry name" value="E69132"/>
</dbReference>
<dbReference type="RefSeq" id="WP_010875898.1">
    <property type="nucleotide sequence ID" value="NC_000916.1"/>
</dbReference>
<dbReference type="PDB" id="1G7R">
    <property type="method" value="X-ray"/>
    <property type="resolution" value="2.20 A"/>
    <property type="chains" value="A=1-594"/>
</dbReference>
<dbReference type="PDB" id="1G7S">
    <property type="method" value="X-ray"/>
    <property type="resolution" value="2.00 A"/>
    <property type="chains" value="A=1-594"/>
</dbReference>
<dbReference type="PDB" id="1G7T">
    <property type="method" value="X-ray"/>
    <property type="resolution" value="2.00 A"/>
    <property type="chains" value="A=1-594"/>
</dbReference>
<dbReference type="PDB" id="4V8Z">
    <property type="method" value="EM"/>
    <property type="resolution" value="6.60 A"/>
    <property type="chains" value="CV=351-586"/>
</dbReference>
<dbReference type="PDBsum" id="1G7R"/>
<dbReference type="PDBsum" id="1G7S"/>
<dbReference type="PDBsum" id="1G7T"/>
<dbReference type="PDBsum" id="4V8Z"/>
<dbReference type="SMR" id="O26359"/>
<dbReference type="STRING" id="187420.MTH_259"/>
<dbReference type="PaxDb" id="187420-MTH_259"/>
<dbReference type="EnsemblBacteria" id="AAB84765">
    <property type="protein sequence ID" value="AAB84765"/>
    <property type="gene ID" value="MTH_259"/>
</dbReference>
<dbReference type="GeneID" id="1470220"/>
<dbReference type="GeneID" id="77400814"/>
<dbReference type="KEGG" id="mth:MTH_259"/>
<dbReference type="PATRIC" id="fig|187420.15.peg.228"/>
<dbReference type="HOGENOM" id="CLU_002656_3_3_2"/>
<dbReference type="InParanoid" id="O26359"/>
<dbReference type="EvolutionaryTrace" id="O26359"/>
<dbReference type="Proteomes" id="UP000005223">
    <property type="component" value="Chromosome"/>
</dbReference>
<dbReference type="GO" id="GO:0005737">
    <property type="term" value="C:cytoplasm"/>
    <property type="evidence" value="ECO:0007669"/>
    <property type="project" value="TreeGrafter"/>
</dbReference>
<dbReference type="GO" id="GO:0005525">
    <property type="term" value="F:GTP binding"/>
    <property type="evidence" value="ECO:0007669"/>
    <property type="project" value="UniProtKB-KW"/>
</dbReference>
<dbReference type="GO" id="GO:0003924">
    <property type="term" value="F:GTPase activity"/>
    <property type="evidence" value="ECO:0007669"/>
    <property type="project" value="UniProtKB-UniRule"/>
</dbReference>
<dbReference type="GO" id="GO:0003743">
    <property type="term" value="F:translation initiation factor activity"/>
    <property type="evidence" value="ECO:0007669"/>
    <property type="project" value="UniProtKB-UniRule"/>
</dbReference>
<dbReference type="CDD" id="cd03703">
    <property type="entry name" value="aeIF5B_II"/>
    <property type="match status" value="1"/>
</dbReference>
<dbReference type="CDD" id="cd16266">
    <property type="entry name" value="IF2_aeIF5B_IV"/>
    <property type="match status" value="1"/>
</dbReference>
<dbReference type="CDD" id="cd01887">
    <property type="entry name" value="IF2_eIF5B"/>
    <property type="match status" value="1"/>
</dbReference>
<dbReference type="FunFam" id="3.40.50.300:FF:000112">
    <property type="entry name" value="Eukaryotic translation initiation factor 5B"/>
    <property type="match status" value="1"/>
</dbReference>
<dbReference type="FunFam" id="3.40.50.10050:FF:000001">
    <property type="entry name" value="Translation initiation factor IF-2"/>
    <property type="match status" value="1"/>
</dbReference>
<dbReference type="Gene3D" id="3.40.50.300">
    <property type="entry name" value="P-loop containing nucleotide triphosphate hydrolases"/>
    <property type="match status" value="1"/>
</dbReference>
<dbReference type="Gene3D" id="2.40.30.10">
    <property type="entry name" value="Translation factors"/>
    <property type="match status" value="2"/>
</dbReference>
<dbReference type="Gene3D" id="3.40.50.10050">
    <property type="entry name" value="Translation initiation factor IF- 2, domain 3"/>
    <property type="match status" value="1"/>
</dbReference>
<dbReference type="HAMAP" id="MF_00100_A">
    <property type="entry name" value="IF_2_A"/>
    <property type="match status" value="1"/>
</dbReference>
<dbReference type="InterPro" id="IPR004161">
    <property type="entry name" value="EFTu-like_2"/>
</dbReference>
<dbReference type="InterPro" id="IPR029459">
    <property type="entry name" value="EFTU-type"/>
</dbReference>
<dbReference type="InterPro" id="IPR027417">
    <property type="entry name" value="P-loop_NTPase"/>
</dbReference>
<dbReference type="InterPro" id="IPR005225">
    <property type="entry name" value="Small_GTP-bd"/>
</dbReference>
<dbReference type="InterPro" id="IPR000795">
    <property type="entry name" value="T_Tr_GTP-bd_dom"/>
</dbReference>
<dbReference type="InterPro" id="IPR004544">
    <property type="entry name" value="TF_aIF-2_arc"/>
</dbReference>
<dbReference type="InterPro" id="IPR015760">
    <property type="entry name" value="TIF_IF2"/>
</dbReference>
<dbReference type="InterPro" id="IPR023115">
    <property type="entry name" value="TIF_IF2_dom3"/>
</dbReference>
<dbReference type="InterPro" id="IPR036925">
    <property type="entry name" value="TIF_IF2_dom3_sf"/>
</dbReference>
<dbReference type="InterPro" id="IPR009000">
    <property type="entry name" value="Transl_B-barrel_sf"/>
</dbReference>
<dbReference type="NCBIfam" id="TIGR00491">
    <property type="entry name" value="aIF-2"/>
    <property type="match status" value="1"/>
</dbReference>
<dbReference type="NCBIfam" id="NF003078">
    <property type="entry name" value="PRK04004.1"/>
    <property type="match status" value="1"/>
</dbReference>
<dbReference type="NCBIfam" id="NF011418">
    <property type="entry name" value="PRK14845.1"/>
    <property type="match status" value="1"/>
</dbReference>
<dbReference type="NCBIfam" id="TIGR00231">
    <property type="entry name" value="small_GTP"/>
    <property type="match status" value="1"/>
</dbReference>
<dbReference type="PANTHER" id="PTHR43381:SF4">
    <property type="entry name" value="EUKARYOTIC TRANSLATION INITIATION FACTOR 5B"/>
    <property type="match status" value="1"/>
</dbReference>
<dbReference type="PANTHER" id="PTHR43381">
    <property type="entry name" value="TRANSLATION INITIATION FACTOR IF-2-RELATED"/>
    <property type="match status" value="1"/>
</dbReference>
<dbReference type="Pfam" id="PF00009">
    <property type="entry name" value="GTP_EFTU"/>
    <property type="match status" value="1"/>
</dbReference>
<dbReference type="Pfam" id="PF03144">
    <property type="entry name" value="GTP_EFTU_D2"/>
    <property type="match status" value="1"/>
</dbReference>
<dbReference type="Pfam" id="PF14578">
    <property type="entry name" value="GTP_EFTU_D4"/>
    <property type="match status" value="1"/>
</dbReference>
<dbReference type="Pfam" id="PF11987">
    <property type="entry name" value="IF-2"/>
    <property type="match status" value="1"/>
</dbReference>
<dbReference type="PRINTS" id="PR00315">
    <property type="entry name" value="ELONGATNFCT"/>
</dbReference>
<dbReference type="SUPFAM" id="SSF52156">
    <property type="entry name" value="Initiation factor IF2/eIF5b, domain 3"/>
    <property type="match status" value="1"/>
</dbReference>
<dbReference type="SUPFAM" id="SSF52540">
    <property type="entry name" value="P-loop containing nucleoside triphosphate hydrolases"/>
    <property type="match status" value="1"/>
</dbReference>
<dbReference type="SUPFAM" id="SSF50447">
    <property type="entry name" value="Translation proteins"/>
    <property type="match status" value="1"/>
</dbReference>
<dbReference type="PROSITE" id="PS51722">
    <property type="entry name" value="G_TR_2"/>
    <property type="match status" value="1"/>
</dbReference>
<name>IF2P_METTH</name>
<comment type="function">
    <text evidence="1">Function in general translation initiation by promoting the binding of the formylmethionine-tRNA to ribosomes. Seems to function along with eIF-2 (By similarity).</text>
</comment>
<comment type="similarity">
    <text evidence="2">Belongs to the TRAFAC class translation factor GTPase superfamily. Classic translation factor GTPase family. IF-2 subfamily.</text>
</comment>
<evidence type="ECO:0000250" key="1"/>
<evidence type="ECO:0000305" key="2"/>
<evidence type="ECO:0007829" key="3">
    <source>
        <dbReference type="PDB" id="1G7R"/>
    </source>
</evidence>
<evidence type="ECO:0007829" key="4">
    <source>
        <dbReference type="PDB" id="1G7S"/>
    </source>
</evidence>
<evidence type="ECO:0007829" key="5">
    <source>
        <dbReference type="PDB" id="1G7T"/>
    </source>
</evidence>
<reference key="1">
    <citation type="journal article" date="1997" name="J. Bacteriol.">
        <title>Complete genome sequence of Methanobacterium thermoautotrophicum deltaH: functional analysis and comparative genomics.</title>
        <authorList>
            <person name="Smith D.R."/>
            <person name="Doucette-Stamm L.A."/>
            <person name="Deloughery C."/>
            <person name="Lee H.-M."/>
            <person name="Dubois J."/>
            <person name="Aldredge T."/>
            <person name="Bashirzadeh R."/>
            <person name="Blakely D."/>
            <person name="Cook R."/>
            <person name="Gilbert K."/>
            <person name="Harrison D."/>
            <person name="Hoang L."/>
            <person name="Keagle P."/>
            <person name="Lumm W."/>
            <person name="Pothier B."/>
            <person name="Qiu D."/>
            <person name="Spadafora R."/>
            <person name="Vicare R."/>
            <person name="Wang Y."/>
            <person name="Wierzbowski J."/>
            <person name="Gibson R."/>
            <person name="Jiwani N."/>
            <person name="Caruso A."/>
            <person name="Bush D."/>
            <person name="Safer H."/>
            <person name="Patwell D."/>
            <person name="Prabhakar S."/>
            <person name="McDougall S."/>
            <person name="Shimer G."/>
            <person name="Goyal A."/>
            <person name="Pietrovski S."/>
            <person name="Church G.M."/>
            <person name="Daniels C.J."/>
            <person name="Mao J.-I."/>
            <person name="Rice P."/>
            <person name="Noelling J."/>
            <person name="Reeve J.N."/>
        </authorList>
    </citation>
    <scope>NUCLEOTIDE SEQUENCE [LARGE SCALE GENOMIC DNA]</scope>
    <source>
        <strain>ATCC 29096 / DSM 1053 / JCM 10044 / NBRC 100330 / Delta H</strain>
    </source>
</reference>
<accession>O26359</accession>
<gene>
    <name type="primary">infB</name>
    <name type="ordered locus">MTH_259</name>
</gene>
<proteinExistence type="evidence at protein level"/>